<accession>C5CI89</accession>
<reference key="1">
    <citation type="submission" date="2009-06" db="EMBL/GenBank/DDBJ databases">
        <title>Complete sequence of Thermotogales bacterium TBF 19.5.1.</title>
        <authorList>
            <consortium name="US DOE Joint Genome Institute"/>
            <person name="Lucas S."/>
            <person name="Copeland A."/>
            <person name="Lapidus A."/>
            <person name="Glavina del Rio T."/>
            <person name="Tice H."/>
            <person name="Bruce D."/>
            <person name="Goodwin L."/>
            <person name="Pitluck S."/>
            <person name="Chertkov O."/>
            <person name="Brettin T."/>
            <person name="Detter J.C."/>
            <person name="Han C."/>
            <person name="Schmutz J."/>
            <person name="Larimer F."/>
            <person name="Land M."/>
            <person name="Hauser L."/>
            <person name="Kyrpides N."/>
            <person name="Ovchinnikova G."/>
            <person name="Noll K."/>
        </authorList>
    </citation>
    <scope>NUCLEOTIDE SEQUENCE [LARGE SCALE GENOMIC DNA]</scope>
    <source>
        <strain>ATCC BAA-1733 / DSM 21960 / TBF 19.5.1</strain>
    </source>
</reference>
<organism>
    <name type="scientific">Kosmotoga olearia (strain ATCC BAA-1733 / DSM 21960 / TBF 19.5.1)</name>
    <dbReference type="NCBI Taxonomy" id="521045"/>
    <lineage>
        <taxon>Bacteria</taxon>
        <taxon>Thermotogati</taxon>
        <taxon>Thermotogota</taxon>
        <taxon>Thermotogae</taxon>
        <taxon>Kosmotogales</taxon>
        <taxon>Kosmotogaceae</taxon>
        <taxon>Kosmotoga</taxon>
    </lineage>
</organism>
<protein>
    <recommendedName>
        <fullName evidence="1">Formate--tetrahydrofolate ligase</fullName>
        <ecNumber evidence="1">6.3.4.3</ecNumber>
    </recommendedName>
    <alternativeName>
        <fullName evidence="1">Formyltetrahydrofolate synthetase</fullName>
        <shortName evidence="1">FHS</shortName>
        <shortName evidence="1">FTHFS</shortName>
    </alternativeName>
</protein>
<sequence length="556" mass="60300">MNDDLAIAQATKLKPIDEIAEFAGIERKYLKPYGNYIAKVSHRIYEELAQREDGNLILVTAITPTSAGEGKTTTSIGLSMALNRLGKKSFVTLREPSIGPVMGIKGGAAGGGYSQVLPMEDINLHFTGDIHAVSLAHNLLSAAIDAHLKFDNELEIDSTQIYWPRAMDMNDRALRKIVVGLGGKANGYPREDKFIITAASEIMAILCLAKDLEDLKERVGNIVIAKNKKKEYVLAKDLKVHGAIAALLKDAIDPNLVQTIEGTPAFIHGGPFANIAHGTNSIIATKIALKLSDYVVTEAGFGADLGGEKFLNFVSQVAGFKPSVVVLVASLRALKLHGGAKKDSITEENLEALEKGFVNLQVHYENLRKFGVPVLTALNVFPTDTDSEKKLFEKLCEKHGIPFGESRVWAKGGKGGEALAREVIKLAETHTSEYHPLYLMDTPIEEKLDILTREIYRAKGYELSPTAKAKLRSFKKNGFGNAPVIVAKTQYSISDNPKLLGAPKDYIFNIRDLNLSAGAGFVVAVSGDIMLMPGLGKEFGAQRIDIDKSGKISGLF</sequence>
<proteinExistence type="inferred from homology"/>
<evidence type="ECO:0000255" key="1">
    <source>
        <dbReference type="HAMAP-Rule" id="MF_01543"/>
    </source>
</evidence>
<name>FTHS_KOSOT</name>
<gene>
    <name evidence="1" type="primary">fhs</name>
    <name type="ordered locus">Kole_2114</name>
</gene>
<feature type="chain" id="PRO_1000215437" description="Formate--tetrahydrofolate ligase">
    <location>
        <begin position="1"/>
        <end position="556"/>
    </location>
</feature>
<feature type="binding site" evidence="1">
    <location>
        <begin position="65"/>
        <end position="72"/>
    </location>
    <ligand>
        <name>ATP</name>
        <dbReference type="ChEBI" id="CHEBI:30616"/>
    </ligand>
</feature>
<comment type="catalytic activity">
    <reaction evidence="1">
        <text>(6S)-5,6,7,8-tetrahydrofolate + formate + ATP = (6R)-10-formyltetrahydrofolate + ADP + phosphate</text>
        <dbReference type="Rhea" id="RHEA:20221"/>
        <dbReference type="ChEBI" id="CHEBI:15740"/>
        <dbReference type="ChEBI" id="CHEBI:30616"/>
        <dbReference type="ChEBI" id="CHEBI:43474"/>
        <dbReference type="ChEBI" id="CHEBI:57453"/>
        <dbReference type="ChEBI" id="CHEBI:195366"/>
        <dbReference type="ChEBI" id="CHEBI:456216"/>
        <dbReference type="EC" id="6.3.4.3"/>
    </reaction>
</comment>
<comment type="pathway">
    <text evidence="1">One-carbon metabolism; tetrahydrofolate interconversion.</text>
</comment>
<comment type="similarity">
    <text evidence="1">Belongs to the formate--tetrahydrofolate ligase family.</text>
</comment>
<keyword id="KW-0067">ATP-binding</keyword>
<keyword id="KW-0436">Ligase</keyword>
<keyword id="KW-0547">Nucleotide-binding</keyword>
<keyword id="KW-0554">One-carbon metabolism</keyword>
<keyword id="KW-1185">Reference proteome</keyword>
<dbReference type="EC" id="6.3.4.3" evidence="1"/>
<dbReference type="EMBL" id="CP001634">
    <property type="protein sequence ID" value="ACR80791.1"/>
    <property type="molecule type" value="Genomic_DNA"/>
</dbReference>
<dbReference type="RefSeq" id="WP_015869432.1">
    <property type="nucleotide sequence ID" value="NC_012785.1"/>
</dbReference>
<dbReference type="SMR" id="C5CI89"/>
<dbReference type="STRING" id="521045.Kole_2114"/>
<dbReference type="KEGG" id="kol:Kole_2114"/>
<dbReference type="eggNOG" id="COG2759">
    <property type="taxonomic scope" value="Bacteria"/>
</dbReference>
<dbReference type="HOGENOM" id="CLU_003601_3_3_0"/>
<dbReference type="OrthoDB" id="9761733at2"/>
<dbReference type="UniPathway" id="UPA00193"/>
<dbReference type="Proteomes" id="UP000002382">
    <property type="component" value="Chromosome"/>
</dbReference>
<dbReference type="GO" id="GO:0005524">
    <property type="term" value="F:ATP binding"/>
    <property type="evidence" value="ECO:0007669"/>
    <property type="project" value="UniProtKB-UniRule"/>
</dbReference>
<dbReference type="GO" id="GO:0004329">
    <property type="term" value="F:formate-tetrahydrofolate ligase activity"/>
    <property type="evidence" value="ECO:0007669"/>
    <property type="project" value="UniProtKB-UniRule"/>
</dbReference>
<dbReference type="GO" id="GO:0035999">
    <property type="term" value="P:tetrahydrofolate interconversion"/>
    <property type="evidence" value="ECO:0007669"/>
    <property type="project" value="UniProtKB-UniRule"/>
</dbReference>
<dbReference type="CDD" id="cd00477">
    <property type="entry name" value="FTHFS"/>
    <property type="match status" value="1"/>
</dbReference>
<dbReference type="FunFam" id="3.30.1510.10:FF:000001">
    <property type="entry name" value="Formate--tetrahydrofolate ligase"/>
    <property type="match status" value="1"/>
</dbReference>
<dbReference type="FunFam" id="3.10.410.10:FF:000001">
    <property type="entry name" value="Putative formate--tetrahydrofolate ligase"/>
    <property type="match status" value="1"/>
</dbReference>
<dbReference type="Gene3D" id="3.30.1510.10">
    <property type="entry name" value="Domain 2, N(10)-formyltetrahydrofolate synthetase"/>
    <property type="match status" value="1"/>
</dbReference>
<dbReference type="Gene3D" id="3.10.410.10">
    <property type="entry name" value="Formyltetrahydrofolate synthetase, domain 3"/>
    <property type="match status" value="1"/>
</dbReference>
<dbReference type="Gene3D" id="3.40.50.300">
    <property type="entry name" value="P-loop containing nucleotide triphosphate hydrolases"/>
    <property type="match status" value="1"/>
</dbReference>
<dbReference type="HAMAP" id="MF_01543">
    <property type="entry name" value="FTHFS"/>
    <property type="match status" value="1"/>
</dbReference>
<dbReference type="InterPro" id="IPR000559">
    <property type="entry name" value="Formate_THF_ligase"/>
</dbReference>
<dbReference type="InterPro" id="IPR020628">
    <property type="entry name" value="Formate_THF_ligase_CS"/>
</dbReference>
<dbReference type="InterPro" id="IPR027417">
    <property type="entry name" value="P-loop_NTPase"/>
</dbReference>
<dbReference type="NCBIfam" id="NF010030">
    <property type="entry name" value="PRK13505.1"/>
    <property type="match status" value="1"/>
</dbReference>
<dbReference type="Pfam" id="PF01268">
    <property type="entry name" value="FTHFS"/>
    <property type="match status" value="1"/>
</dbReference>
<dbReference type="SUPFAM" id="SSF52540">
    <property type="entry name" value="P-loop containing nucleoside triphosphate hydrolases"/>
    <property type="match status" value="1"/>
</dbReference>
<dbReference type="PROSITE" id="PS00721">
    <property type="entry name" value="FTHFS_1"/>
    <property type="match status" value="1"/>
</dbReference>
<dbReference type="PROSITE" id="PS00722">
    <property type="entry name" value="FTHFS_2"/>
    <property type="match status" value="1"/>
</dbReference>